<dbReference type="EC" id="3.4.11.-"/>
<dbReference type="EMBL" id="AK125832">
    <property type="status" value="NOT_ANNOTATED_CDS"/>
    <property type="molecule type" value="mRNA"/>
</dbReference>
<dbReference type="EMBL" id="AC021317">
    <property type="status" value="NOT_ANNOTATED_CDS"/>
    <property type="molecule type" value="Genomic_DNA"/>
</dbReference>
<dbReference type="EMBL" id="BC067792">
    <property type="status" value="NOT_ANNOTATED_CDS"/>
    <property type="molecule type" value="mRNA"/>
</dbReference>
<dbReference type="SMR" id="A6NEC2"/>
<dbReference type="FunCoup" id="A6NEC2">
    <property type="interactions" value="382"/>
</dbReference>
<dbReference type="IntAct" id="A6NEC2">
    <property type="interactions" value="6"/>
</dbReference>
<dbReference type="MEROPS" id="M01.010"/>
<dbReference type="iPTMnet" id="A6NEC2"/>
<dbReference type="MetOSite" id="A6NEC2"/>
<dbReference type="PhosphoSitePlus" id="A6NEC2"/>
<dbReference type="BioMuta" id="NPEPPSL1"/>
<dbReference type="jPOST" id="A6NEC2"/>
<dbReference type="MassIVE" id="A6NEC2"/>
<dbReference type="PeptideAtlas" id="A6NEC2"/>
<dbReference type="ProteomicsDB" id="972">
    <molecule id="A6NEC2-1"/>
</dbReference>
<dbReference type="ProteomicsDB" id="973">
    <molecule id="A6NEC2-2"/>
</dbReference>
<dbReference type="ProteomicsDB" id="974">
    <molecule id="A6NEC2-3"/>
</dbReference>
<dbReference type="AGR" id="HGNC:44259"/>
<dbReference type="neXtProt" id="NX_A6NEC2"/>
<dbReference type="InParanoid" id="A6NEC2"/>
<dbReference type="PAN-GO" id="A6NEC2">
    <property type="GO annotations" value="6 GO annotations based on evolutionary models"/>
</dbReference>
<dbReference type="PhylomeDB" id="A6NEC2"/>
<dbReference type="PathwayCommons" id="A6NEC2"/>
<dbReference type="SignaLink" id="A6NEC2"/>
<dbReference type="Pharos" id="A6NEC2">
    <property type="development level" value="Tdark"/>
</dbReference>
<dbReference type="Proteomes" id="UP000005640">
    <property type="component" value="Unplaced"/>
</dbReference>
<dbReference type="RNAct" id="A6NEC2">
    <property type="molecule type" value="protein"/>
</dbReference>
<dbReference type="GO" id="GO:0005737">
    <property type="term" value="C:cytoplasm"/>
    <property type="evidence" value="ECO:0000318"/>
    <property type="project" value="GO_Central"/>
</dbReference>
<dbReference type="GO" id="GO:0070062">
    <property type="term" value="C:extracellular exosome"/>
    <property type="evidence" value="ECO:0007005"/>
    <property type="project" value="UniProtKB"/>
</dbReference>
<dbReference type="GO" id="GO:0005615">
    <property type="term" value="C:extracellular space"/>
    <property type="evidence" value="ECO:0000318"/>
    <property type="project" value="GO_Central"/>
</dbReference>
<dbReference type="GO" id="GO:0016020">
    <property type="term" value="C:membrane"/>
    <property type="evidence" value="ECO:0000318"/>
    <property type="project" value="GO_Central"/>
</dbReference>
<dbReference type="GO" id="GO:0070006">
    <property type="term" value="F:metalloaminopeptidase activity"/>
    <property type="evidence" value="ECO:0000318"/>
    <property type="project" value="GO_Central"/>
</dbReference>
<dbReference type="GO" id="GO:0042277">
    <property type="term" value="F:peptide binding"/>
    <property type="evidence" value="ECO:0000318"/>
    <property type="project" value="GO_Central"/>
</dbReference>
<dbReference type="GO" id="GO:0008270">
    <property type="term" value="F:zinc ion binding"/>
    <property type="evidence" value="ECO:0000318"/>
    <property type="project" value="GO_Central"/>
</dbReference>
<dbReference type="GO" id="GO:0043171">
    <property type="term" value="P:peptide catabolic process"/>
    <property type="evidence" value="ECO:0000318"/>
    <property type="project" value="GO_Central"/>
</dbReference>
<dbReference type="GO" id="GO:0006508">
    <property type="term" value="P:proteolysis"/>
    <property type="evidence" value="ECO:0000318"/>
    <property type="project" value="GO_Central"/>
</dbReference>
<dbReference type="CDD" id="cd09601">
    <property type="entry name" value="M1_APN-Q_like"/>
    <property type="match status" value="1"/>
</dbReference>
<dbReference type="FunFam" id="1.10.390.10:FF:000001">
    <property type="entry name" value="Aminopeptidase"/>
    <property type="match status" value="1"/>
</dbReference>
<dbReference type="FunFam" id="2.60.40.1730:FF:000002">
    <property type="entry name" value="Aminopeptidase"/>
    <property type="match status" value="1"/>
</dbReference>
<dbReference type="Gene3D" id="1.10.390.10">
    <property type="entry name" value="Neutral Protease Domain 2"/>
    <property type="match status" value="1"/>
</dbReference>
<dbReference type="Gene3D" id="2.60.40.1730">
    <property type="entry name" value="tricorn interacting facor f3 domain"/>
    <property type="match status" value="1"/>
</dbReference>
<dbReference type="InterPro" id="IPR045357">
    <property type="entry name" value="Aminopeptidase_N-like_N"/>
</dbReference>
<dbReference type="InterPro" id="IPR042097">
    <property type="entry name" value="Aminopeptidase_N-like_N_sf"/>
</dbReference>
<dbReference type="InterPro" id="IPR034016">
    <property type="entry name" value="M1_APN-typ"/>
</dbReference>
<dbReference type="InterPro" id="IPR001930">
    <property type="entry name" value="Peptidase_M1"/>
</dbReference>
<dbReference type="InterPro" id="IPR050344">
    <property type="entry name" value="Peptidase_M1_aminopeptidases"/>
</dbReference>
<dbReference type="InterPro" id="IPR014782">
    <property type="entry name" value="Peptidase_M1_dom"/>
</dbReference>
<dbReference type="InterPro" id="IPR027268">
    <property type="entry name" value="Peptidase_M4/M1_CTD_sf"/>
</dbReference>
<dbReference type="PANTHER" id="PTHR11533">
    <property type="entry name" value="PROTEASE M1 ZINC METALLOPROTEASE"/>
    <property type="match status" value="1"/>
</dbReference>
<dbReference type="PANTHER" id="PTHR11533:SF174">
    <property type="entry name" value="PUROMYCIN-SENSITIVE AMINOPEPTIDASE-RELATED"/>
    <property type="match status" value="1"/>
</dbReference>
<dbReference type="Pfam" id="PF01433">
    <property type="entry name" value="Peptidase_M1"/>
    <property type="match status" value="1"/>
</dbReference>
<dbReference type="Pfam" id="PF17900">
    <property type="entry name" value="Peptidase_M1_N"/>
    <property type="match status" value="1"/>
</dbReference>
<dbReference type="PRINTS" id="PR00756">
    <property type="entry name" value="ALADIPTASE"/>
</dbReference>
<dbReference type="SUPFAM" id="SSF63737">
    <property type="entry name" value="Leukotriene A4 hydrolase N-terminal domain"/>
    <property type="match status" value="1"/>
</dbReference>
<dbReference type="SUPFAM" id="SSF55486">
    <property type="entry name" value="Metalloproteases ('zincins'), catalytic domain"/>
    <property type="match status" value="1"/>
</dbReference>
<dbReference type="PROSITE" id="PS00142">
    <property type="entry name" value="ZINC_PROTEASE"/>
    <property type="match status" value="1"/>
</dbReference>
<accession>A6NEC2</accession>
<accession>A8MZ60</accession>
<evidence type="ECO:0000250" key="1"/>
<evidence type="ECO:0000255" key="2">
    <source>
        <dbReference type="PROSITE-ProRule" id="PRU10095"/>
    </source>
</evidence>
<evidence type="ECO:0000303" key="3">
    <source>
    </source>
</evidence>
<evidence type="ECO:0000303" key="4">
    <source>
    </source>
</evidence>
<evidence type="ECO:0000305" key="5"/>
<sequence length="478" mass="53747">MWLAAAAPSLARRLLFLGPPPPPLLLLVFSRSSRRRLHSLGLAAMPEKRPFERLPADVSPINCSLCLKPDLLDFTFEGKLEAAAQVRQATNQIVMNCADIDIITASYAPEGDEEIHATGFNYQNEDEKVTLSFPSTLQTGTGTLKIDFVGELNDKMKGFYRSKYTTPSGEVRYAAVTQFEATDARRAFPCWDERAIKATFDISLVVPKDRVALSNMNVIDRKPYPDDENLVEVKFARTPVTSTYLVAFVVGEYDFVETRSKDGVCVCVYTPVGKAEQGKFALEVAAKTLPFYKDYFNVPYPLPKIDLIAIADFAAGAMENWDLVTYRETALLIDPKNSCSSSRQWVALVVGHELAHQWFGNLVTMEWWTHLRLNEGFASWIEYLCVDHCFPEYDIWTQFVSADYTRAQELDALDNSHPIEVSVGHPSEVDEIFDAISYSKGASVIRMLHDYIGDKDFKKGMNMYLTKFQQKNAAAGNL</sequence>
<feature type="chain" id="PRO_0000331765" description="Puromycin-sensitive aminopeptidase-like protein">
    <location>
        <begin position="1"/>
        <end position="478"/>
    </location>
</feature>
<feature type="active site" description="Proton acceptor" evidence="2">
    <location>
        <position position="353"/>
    </location>
</feature>
<feature type="binding site" evidence="1">
    <location>
        <position position="180"/>
    </location>
    <ligand>
        <name>substrate</name>
    </ligand>
</feature>
<feature type="binding site" evidence="1">
    <location>
        <begin position="316"/>
        <end position="320"/>
    </location>
    <ligand>
        <name>substrate</name>
    </ligand>
</feature>
<feature type="binding site" evidence="2">
    <location>
        <position position="352"/>
    </location>
    <ligand>
        <name>Zn(2+)</name>
        <dbReference type="ChEBI" id="CHEBI:29105"/>
        <note>catalytic</note>
    </ligand>
</feature>
<feature type="binding site" evidence="2">
    <location>
        <position position="356"/>
    </location>
    <ligand>
        <name>Zn(2+)</name>
        <dbReference type="ChEBI" id="CHEBI:29105"/>
        <note>catalytic</note>
    </ligand>
</feature>
<feature type="binding site" evidence="2">
    <location>
        <position position="375"/>
    </location>
    <ligand>
        <name>Zn(2+)</name>
        <dbReference type="ChEBI" id="CHEBI:29105"/>
        <note>catalytic</note>
    </ligand>
</feature>
<feature type="site" description="Transition state stabilizer" evidence="1">
    <location>
        <position position="438"/>
    </location>
</feature>
<feature type="splice variant" id="VSP_035110" description="In isoform 2." evidence="3">
    <location>
        <begin position="1"/>
        <end position="215"/>
    </location>
</feature>
<feature type="splice variant" id="VSP_035111" description="In isoform 3." evidence="4">
    <original>K</original>
    <variation>Y</variation>
    <location>
        <position position="163"/>
    </location>
</feature>
<feature type="splice variant" id="VSP_035112" description="In isoform 3." evidence="4">
    <location>
        <begin position="164"/>
        <end position="478"/>
    </location>
</feature>
<feature type="sequence conflict" description="In Ref. 3; BC067792." evidence="5" ref="3">
    <original>P</original>
    <variation>T</variation>
    <location>
        <position position="22"/>
    </location>
</feature>
<feature type="sequence conflict" description="In Ref. 1; AK125832 and 3; BC067792." evidence="5" ref="1 3">
    <original>R</original>
    <variation>W</variation>
    <location>
        <position position="372"/>
    </location>
</feature>
<gene>
    <name type="primary">NPEPPSL1</name>
</gene>
<organism>
    <name type="scientific">Homo sapiens</name>
    <name type="common">Human</name>
    <dbReference type="NCBI Taxonomy" id="9606"/>
    <lineage>
        <taxon>Eukaryota</taxon>
        <taxon>Metazoa</taxon>
        <taxon>Chordata</taxon>
        <taxon>Craniata</taxon>
        <taxon>Vertebrata</taxon>
        <taxon>Euteleostomi</taxon>
        <taxon>Mammalia</taxon>
        <taxon>Eutheria</taxon>
        <taxon>Euarchontoglires</taxon>
        <taxon>Primates</taxon>
        <taxon>Haplorrhini</taxon>
        <taxon>Catarrhini</taxon>
        <taxon>Hominidae</taxon>
        <taxon>Homo</taxon>
    </lineage>
</organism>
<comment type="function">
    <text evidence="1">Aminopeptidase with broad substrate specificity to several peptides.</text>
</comment>
<comment type="cofactor">
    <cofactor evidence="1">
        <name>Zn(2+)</name>
        <dbReference type="ChEBI" id="CHEBI:29105"/>
    </cofactor>
    <text evidence="1">Binds 1 zinc ion per subunit.</text>
</comment>
<comment type="alternative products">
    <event type="alternative splicing"/>
    <isoform>
        <id>A6NEC2-1</id>
        <name>1</name>
        <sequence type="displayed"/>
    </isoform>
    <isoform>
        <id>A6NEC2-2</id>
        <name>2</name>
        <sequence type="described" ref="VSP_035110"/>
    </isoform>
    <isoform>
        <id>A6NEC2-3</id>
        <name>3</name>
        <sequence type="described" ref="VSP_035111 VSP_035112"/>
    </isoform>
</comment>
<comment type="similarity">
    <text evidence="5">Belongs to the peptidase M1 family.</text>
</comment>
<protein>
    <recommendedName>
        <fullName>Puromycin-sensitive aminopeptidase-like protein</fullName>
        <ecNumber>3.4.11.-</ecNumber>
    </recommendedName>
</protein>
<name>PSAL_HUMAN</name>
<keyword id="KW-0025">Alternative splicing</keyword>
<keyword id="KW-0031">Aminopeptidase</keyword>
<keyword id="KW-0378">Hydrolase</keyword>
<keyword id="KW-0479">Metal-binding</keyword>
<keyword id="KW-0482">Metalloprotease</keyword>
<keyword id="KW-0645">Protease</keyword>
<keyword id="KW-1267">Proteomics identification</keyword>
<keyword id="KW-1185">Reference proteome</keyword>
<keyword id="KW-0862">Zinc</keyword>
<proteinExistence type="evidence at protein level"/>
<reference key="1">
    <citation type="journal article" date="2004" name="Nat. Genet.">
        <title>Complete sequencing and characterization of 21,243 full-length human cDNAs.</title>
        <authorList>
            <person name="Ota T."/>
            <person name="Suzuki Y."/>
            <person name="Nishikawa T."/>
            <person name="Otsuki T."/>
            <person name="Sugiyama T."/>
            <person name="Irie R."/>
            <person name="Wakamatsu A."/>
            <person name="Hayashi K."/>
            <person name="Sato H."/>
            <person name="Nagai K."/>
            <person name="Kimura K."/>
            <person name="Makita H."/>
            <person name="Sekine M."/>
            <person name="Obayashi M."/>
            <person name="Nishi T."/>
            <person name="Shibahara T."/>
            <person name="Tanaka T."/>
            <person name="Ishii S."/>
            <person name="Yamamoto J."/>
            <person name="Saito K."/>
            <person name="Kawai Y."/>
            <person name="Isono Y."/>
            <person name="Nakamura Y."/>
            <person name="Nagahari K."/>
            <person name="Murakami K."/>
            <person name="Yasuda T."/>
            <person name="Iwayanagi T."/>
            <person name="Wagatsuma M."/>
            <person name="Shiratori A."/>
            <person name="Sudo H."/>
            <person name="Hosoiri T."/>
            <person name="Kaku Y."/>
            <person name="Kodaira H."/>
            <person name="Kondo H."/>
            <person name="Sugawara M."/>
            <person name="Takahashi M."/>
            <person name="Kanda K."/>
            <person name="Yokoi T."/>
            <person name="Furuya T."/>
            <person name="Kikkawa E."/>
            <person name="Omura Y."/>
            <person name="Abe K."/>
            <person name="Kamihara K."/>
            <person name="Katsuta N."/>
            <person name="Sato K."/>
            <person name="Tanikawa M."/>
            <person name="Yamazaki M."/>
            <person name="Ninomiya K."/>
            <person name="Ishibashi T."/>
            <person name="Yamashita H."/>
            <person name="Murakawa K."/>
            <person name="Fujimori K."/>
            <person name="Tanai H."/>
            <person name="Kimata M."/>
            <person name="Watanabe M."/>
            <person name="Hiraoka S."/>
            <person name="Chiba Y."/>
            <person name="Ishida S."/>
            <person name="Ono Y."/>
            <person name="Takiguchi S."/>
            <person name="Watanabe S."/>
            <person name="Yosida M."/>
            <person name="Hotuta T."/>
            <person name="Kusano J."/>
            <person name="Kanehori K."/>
            <person name="Takahashi-Fujii A."/>
            <person name="Hara H."/>
            <person name="Tanase T.-O."/>
            <person name="Nomura Y."/>
            <person name="Togiya S."/>
            <person name="Komai F."/>
            <person name="Hara R."/>
            <person name="Takeuchi K."/>
            <person name="Arita M."/>
            <person name="Imose N."/>
            <person name="Musashino K."/>
            <person name="Yuuki H."/>
            <person name="Oshima A."/>
            <person name="Sasaki N."/>
            <person name="Aotsuka S."/>
            <person name="Yoshikawa Y."/>
            <person name="Matsunawa H."/>
            <person name="Ichihara T."/>
            <person name="Shiohata N."/>
            <person name="Sano S."/>
            <person name="Moriya S."/>
            <person name="Momiyama H."/>
            <person name="Satoh N."/>
            <person name="Takami S."/>
            <person name="Terashima Y."/>
            <person name="Suzuki O."/>
            <person name="Nakagawa S."/>
            <person name="Senoh A."/>
            <person name="Mizoguchi H."/>
            <person name="Goto Y."/>
            <person name="Shimizu F."/>
            <person name="Wakebe H."/>
            <person name="Hishigaki H."/>
            <person name="Watanabe T."/>
            <person name="Sugiyama A."/>
            <person name="Takemoto M."/>
            <person name="Kawakami B."/>
            <person name="Yamazaki M."/>
            <person name="Watanabe K."/>
            <person name="Kumagai A."/>
            <person name="Itakura S."/>
            <person name="Fukuzumi Y."/>
            <person name="Fujimori Y."/>
            <person name="Komiyama M."/>
            <person name="Tashiro H."/>
            <person name="Tanigami A."/>
            <person name="Fujiwara T."/>
            <person name="Ono T."/>
            <person name="Yamada K."/>
            <person name="Fujii Y."/>
            <person name="Ozaki K."/>
            <person name="Hirao M."/>
            <person name="Ohmori Y."/>
            <person name="Kawabata A."/>
            <person name="Hikiji T."/>
            <person name="Kobatake N."/>
            <person name="Inagaki H."/>
            <person name="Ikema Y."/>
            <person name="Okamoto S."/>
            <person name="Okitani R."/>
            <person name="Kawakami T."/>
            <person name="Noguchi S."/>
            <person name="Itoh T."/>
            <person name="Shigeta K."/>
            <person name="Senba T."/>
            <person name="Matsumura K."/>
            <person name="Nakajima Y."/>
            <person name="Mizuno T."/>
            <person name="Morinaga M."/>
            <person name="Sasaki M."/>
            <person name="Togashi T."/>
            <person name="Oyama M."/>
            <person name="Hata H."/>
            <person name="Watanabe M."/>
            <person name="Komatsu T."/>
            <person name="Mizushima-Sugano J."/>
            <person name="Satoh T."/>
            <person name="Shirai Y."/>
            <person name="Takahashi Y."/>
            <person name="Nakagawa K."/>
            <person name="Okumura K."/>
            <person name="Nagase T."/>
            <person name="Nomura N."/>
            <person name="Kikuchi H."/>
            <person name="Masuho Y."/>
            <person name="Yamashita R."/>
            <person name="Nakai K."/>
            <person name="Yada T."/>
            <person name="Nakamura Y."/>
            <person name="Ohara O."/>
            <person name="Isogai T."/>
            <person name="Sugano S."/>
        </authorList>
    </citation>
    <scope>NUCLEOTIDE SEQUENCE [LARGE SCALE MRNA] (ISOFORM 2)</scope>
</reference>
<reference key="2">
    <citation type="journal article" date="2006" name="Nature">
        <title>DNA sequence of human chromosome 17 and analysis of rearrangement in the human lineage.</title>
        <authorList>
            <person name="Zody M.C."/>
            <person name="Garber M."/>
            <person name="Adams D.J."/>
            <person name="Sharpe T."/>
            <person name="Harrow J."/>
            <person name="Lupski J.R."/>
            <person name="Nicholson C."/>
            <person name="Searle S.M."/>
            <person name="Wilming L."/>
            <person name="Young S.K."/>
            <person name="Abouelleil A."/>
            <person name="Allen N.R."/>
            <person name="Bi W."/>
            <person name="Bloom T."/>
            <person name="Borowsky M.L."/>
            <person name="Bugalter B.E."/>
            <person name="Butler J."/>
            <person name="Chang J.L."/>
            <person name="Chen C.-K."/>
            <person name="Cook A."/>
            <person name="Corum B."/>
            <person name="Cuomo C.A."/>
            <person name="de Jong P.J."/>
            <person name="DeCaprio D."/>
            <person name="Dewar K."/>
            <person name="FitzGerald M."/>
            <person name="Gilbert J."/>
            <person name="Gibson R."/>
            <person name="Gnerre S."/>
            <person name="Goldstein S."/>
            <person name="Grafham D.V."/>
            <person name="Grocock R."/>
            <person name="Hafez N."/>
            <person name="Hagopian D.S."/>
            <person name="Hart E."/>
            <person name="Norman C.H."/>
            <person name="Humphray S."/>
            <person name="Jaffe D.B."/>
            <person name="Jones M."/>
            <person name="Kamal M."/>
            <person name="Khodiyar V.K."/>
            <person name="LaButti K."/>
            <person name="Laird G."/>
            <person name="Lehoczky J."/>
            <person name="Liu X."/>
            <person name="Lokyitsang T."/>
            <person name="Loveland J."/>
            <person name="Lui A."/>
            <person name="Macdonald P."/>
            <person name="Major J.E."/>
            <person name="Matthews L."/>
            <person name="Mauceli E."/>
            <person name="McCarroll S.A."/>
            <person name="Mihalev A.H."/>
            <person name="Mudge J."/>
            <person name="Nguyen C."/>
            <person name="Nicol R."/>
            <person name="O'Leary S.B."/>
            <person name="Osoegawa K."/>
            <person name="Schwartz D.C."/>
            <person name="Shaw-Smith C."/>
            <person name="Stankiewicz P."/>
            <person name="Steward C."/>
            <person name="Swarbreck D."/>
            <person name="Venkataraman V."/>
            <person name="Whittaker C.A."/>
            <person name="Yang X."/>
            <person name="Zimmer A.R."/>
            <person name="Bradley A."/>
            <person name="Hubbard T."/>
            <person name="Birren B.W."/>
            <person name="Rogers J."/>
            <person name="Lander E.S."/>
            <person name="Nusbaum C."/>
        </authorList>
    </citation>
    <scope>NUCLEOTIDE SEQUENCE [LARGE SCALE GENOMIC DNA]</scope>
</reference>
<reference key="3">
    <citation type="journal article" date="2004" name="Genome Res.">
        <title>The status, quality, and expansion of the NIH full-length cDNA project: the Mammalian Gene Collection (MGC).</title>
        <authorList>
            <consortium name="The MGC Project Team"/>
        </authorList>
    </citation>
    <scope>NUCLEOTIDE SEQUENCE [LARGE SCALE MRNA] (ISOFORM 3)</scope>
    <source>
        <tissue>Hypothalamus</tissue>
    </source>
</reference>